<name>HEM3_RICCK</name>
<proteinExistence type="inferred from homology"/>
<organism>
    <name type="scientific">Rickettsia canadensis (strain McKiel)</name>
    <dbReference type="NCBI Taxonomy" id="293613"/>
    <lineage>
        <taxon>Bacteria</taxon>
        <taxon>Pseudomonadati</taxon>
        <taxon>Pseudomonadota</taxon>
        <taxon>Alphaproteobacteria</taxon>
        <taxon>Rickettsiales</taxon>
        <taxon>Rickettsiaceae</taxon>
        <taxon>Rickettsieae</taxon>
        <taxon>Rickettsia</taxon>
        <taxon>belli group</taxon>
    </lineage>
</organism>
<dbReference type="EC" id="2.5.1.61" evidence="1"/>
<dbReference type="EMBL" id="CP000409">
    <property type="protein sequence ID" value="ABV73432.1"/>
    <property type="molecule type" value="Genomic_DNA"/>
</dbReference>
<dbReference type="RefSeq" id="WP_012148629.1">
    <property type="nucleotide sequence ID" value="NC_009879.1"/>
</dbReference>
<dbReference type="SMR" id="A8EYJ9"/>
<dbReference type="STRING" id="293613.A1E_02435"/>
<dbReference type="KEGG" id="rcm:A1E_02435"/>
<dbReference type="eggNOG" id="COG0181">
    <property type="taxonomic scope" value="Bacteria"/>
</dbReference>
<dbReference type="HOGENOM" id="CLU_019704_0_2_5"/>
<dbReference type="UniPathway" id="UPA00251">
    <property type="reaction ID" value="UER00319"/>
</dbReference>
<dbReference type="Proteomes" id="UP000007056">
    <property type="component" value="Chromosome"/>
</dbReference>
<dbReference type="GO" id="GO:0005737">
    <property type="term" value="C:cytoplasm"/>
    <property type="evidence" value="ECO:0007669"/>
    <property type="project" value="TreeGrafter"/>
</dbReference>
<dbReference type="GO" id="GO:0004418">
    <property type="term" value="F:hydroxymethylbilane synthase activity"/>
    <property type="evidence" value="ECO:0007669"/>
    <property type="project" value="UniProtKB-UniRule"/>
</dbReference>
<dbReference type="GO" id="GO:0006782">
    <property type="term" value="P:protoporphyrinogen IX biosynthetic process"/>
    <property type="evidence" value="ECO:0007669"/>
    <property type="project" value="UniProtKB-UniRule"/>
</dbReference>
<dbReference type="CDD" id="cd13647">
    <property type="entry name" value="PBP2_PBGD_2"/>
    <property type="match status" value="1"/>
</dbReference>
<dbReference type="FunFam" id="3.40.190.10:FF:000004">
    <property type="entry name" value="Porphobilinogen deaminase"/>
    <property type="match status" value="1"/>
</dbReference>
<dbReference type="FunFam" id="3.40.190.10:FF:000005">
    <property type="entry name" value="Porphobilinogen deaminase"/>
    <property type="match status" value="1"/>
</dbReference>
<dbReference type="Gene3D" id="3.40.190.10">
    <property type="entry name" value="Periplasmic binding protein-like II"/>
    <property type="match status" value="2"/>
</dbReference>
<dbReference type="Gene3D" id="3.30.160.40">
    <property type="entry name" value="Porphobilinogen deaminase, C-terminal domain"/>
    <property type="match status" value="1"/>
</dbReference>
<dbReference type="HAMAP" id="MF_00260">
    <property type="entry name" value="Porphobil_deam"/>
    <property type="match status" value="1"/>
</dbReference>
<dbReference type="InterPro" id="IPR000860">
    <property type="entry name" value="HemC"/>
</dbReference>
<dbReference type="InterPro" id="IPR022419">
    <property type="entry name" value="Porphobilin_deaminase_cofac_BS"/>
</dbReference>
<dbReference type="InterPro" id="IPR022417">
    <property type="entry name" value="Porphobilin_deaminase_N"/>
</dbReference>
<dbReference type="InterPro" id="IPR022418">
    <property type="entry name" value="Porphobilinogen_deaminase_C"/>
</dbReference>
<dbReference type="InterPro" id="IPR036803">
    <property type="entry name" value="Porphobilinogen_deaminase_C_sf"/>
</dbReference>
<dbReference type="NCBIfam" id="TIGR00212">
    <property type="entry name" value="hemC"/>
    <property type="match status" value="1"/>
</dbReference>
<dbReference type="PANTHER" id="PTHR11557">
    <property type="entry name" value="PORPHOBILINOGEN DEAMINASE"/>
    <property type="match status" value="1"/>
</dbReference>
<dbReference type="PANTHER" id="PTHR11557:SF0">
    <property type="entry name" value="PORPHOBILINOGEN DEAMINASE"/>
    <property type="match status" value="1"/>
</dbReference>
<dbReference type="Pfam" id="PF01379">
    <property type="entry name" value="Porphobil_deam"/>
    <property type="match status" value="1"/>
</dbReference>
<dbReference type="Pfam" id="PF03900">
    <property type="entry name" value="Porphobil_deamC"/>
    <property type="match status" value="1"/>
</dbReference>
<dbReference type="PIRSF" id="PIRSF001438">
    <property type="entry name" value="4pyrrol_synth_OHMeBilane_synth"/>
    <property type="match status" value="1"/>
</dbReference>
<dbReference type="PRINTS" id="PR00151">
    <property type="entry name" value="PORPHBDMNASE"/>
</dbReference>
<dbReference type="SUPFAM" id="SSF53850">
    <property type="entry name" value="Periplasmic binding protein-like II"/>
    <property type="match status" value="1"/>
</dbReference>
<dbReference type="SUPFAM" id="SSF54782">
    <property type="entry name" value="Porphobilinogen deaminase (hydroxymethylbilane synthase), C-terminal domain"/>
    <property type="match status" value="1"/>
</dbReference>
<dbReference type="PROSITE" id="PS00533">
    <property type="entry name" value="PORPHOBILINOGEN_DEAM"/>
    <property type="match status" value="1"/>
</dbReference>
<evidence type="ECO:0000255" key="1">
    <source>
        <dbReference type="HAMAP-Rule" id="MF_00260"/>
    </source>
</evidence>
<sequence length="301" mass="34008">MTHSIRIGTRKSPLALIQTNLVIQQIKQFVPDINYKIVPITTSGDLIQNKPLYDIGGKALFLKEIEQALLDKKIDLAVHSLKDVPGRIPEDLIIAAVLEREDPRDVFVCLKYKSIEELPQNAIIGSSAVRRKTFIEKIRSDLKVTVFRGNVDSRIKKLMNGEVDATILAYAGLKRLNAFNPQYCHLIEYSQMLPCIGQGVIAVEIRKDDNAMLETCNQINHLTTFELIKPERAFLEYLDANCRTPIAAYSKYLDKDNIETDFMLGNLESSKITFHTETTNIKTSKEAGIKAAKIMLSELER</sequence>
<keyword id="KW-0627">Porphyrin biosynthesis</keyword>
<keyword id="KW-0808">Transferase</keyword>
<comment type="function">
    <text evidence="1">Tetrapolymerization of the monopyrrole PBG into the hydroxymethylbilane pre-uroporphyrinogen in several discrete steps.</text>
</comment>
<comment type="catalytic activity">
    <reaction evidence="1">
        <text>4 porphobilinogen + H2O = hydroxymethylbilane + 4 NH4(+)</text>
        <dbReference type="Rhea" id="RHEA:13185"/>
        <dbReference type="ChEBI" id="CHEBI:15377"/>
        <dbReference type="ChEBI" id="CHEBI:28938"/>
        <dbReference type="ChEBI" id="CHEBI:57845"/>
        <dbReference type="ChEBI" id="CHEBI:58126"/>
        <dbReference type="EC" id="2.5.1.61"/>
    </reaction>
</comment>
<comment type="cofactor">
    <cofactor evidence="1">
        <name>dipyrromethane</name>
        <dbReference type="ChEBI" id="CHEBI:60342"/>
    </cofactor>
    <text evidence="1">Binds 1 dipyrromethane group covalently.</text>
</comment>
<comment type="pathway">
    <text evidence="1">Porphyrin-containing compound metabolism; protoporphyrin-IX biosynthesis; coproporphyrinogen-III from 5-aminolevulinate: step 2/4.</text>
</comment>
<comment type="subunit">
    <text evidence="1">Monomer.</text>
</comment>
<comment type="miscellaneous">
    <text evidence="1">The porphobilinogen subunits are added to the dipyrromethane group.</text>
</comment>
<comment type="similarity">
    <text evidence="1">Belongs to the HMBS family.</text>
</comment>
<reference key="1">
    <citation type="submission" date="2007-09" db="EMBL/GenBank/DDBJ databases">
        <title>Complete genome sequence of Rickettsia canadensis.</title>
        <authorList>
            <person name="Madan A."/>
            <person name="Fahey J."/>
            <person name="Helton E."/>
            <person name="Ketteman M."/>
            <person name="Madan A."/>
            <person name="Rodrigues S."/>
            <person name="Sanchez A."/>
            <person name="Whiting M."/>
            <person name="Dasch G."/>
            <person name="Eremeeva M."/>
        </authorList>
    </citation>
    <scope>NUCLEOTIDE SEQUENCE [LARGE SCALE GENOMIC DNA]</scope>
    <source>
        <strain>McKiel</strain>
    </source>
</reference>
<accession>A8EYJ9</accession>
<gene>
    <name evidence="1" type="primary">hemC</name>
    <name type="ordered locus">A1E_02435</name>
</gene>
<protein>
    <recommendedName>
        <fullName evidence="1">Porphobilinogen deaminase</fullName>
        <shortName evidence="1">PBG</shortName>
        <ecNumber evidence="1">2.5.1.61</ecNumber>
    </recommendedName>
    <alternativeName>
        <fullName evidence="1">Hydroxymethylbilane synthase</fullName>
        <shortName evidence="1">HMBS</shortName>
    </alternativeName>
    <alternativeName>
        <fullName evidence="1">Pre-uroporphyrinogen synthase</fullName>
    </alternativeName>
</protein>
<feature type="chain" id="PRO_1000047763" description="Porphobilinogen deaminase">
    <location>
        <begin position="1"/>
        <end position="301"/>
    </location>
</feature>
<feature type="modified residue" description="S-(dipyrrolylmethanemethyl)cysteine" evidence="1">
    <location>
        <position position="242"/>
    </location>
</feature>